<comment type="function">
    <text evidence="2">Part of the tripartite ATP-independent periplasmic (TRAP) transport system UehABC, which imports both ectoine and 5-hydroxyectoine as nutrients, and not as osmoprotectants. UehA binds both ectoine and 5-hydroxyectoine with high specificity and affinity.</text>
</comment>
<comment type="subunit">
    <text evidence="2 5">Monomer (PubMed:19362561). The complex comprises the extracytoplasmic solute receptor protein UehA, and the two transmembrane proteins UehB and UehC (Probable).</text>
</comment>
<comment type="subcellular location">
    <subcellularLocation>
        <location evidence="2">Periplasm</location>
    </subcellularLocation>
</comment>
<comment type="miscellaneous">
    <text evidence="2">Transport is enhanced in cells that are grown in the presence of ectoine, but not by high-salinity media.</text>
</comment>
<comment type="similarity">
    <text evidence="4">Belongs to the bacterial solute-binding protein 7 family.</text>
</comment>
<accession>Q5LUA7</accession>
<name>UEHA_RUEPO</name>
<reference key="1">
    <citation type="journal article" date="2004" name="Nature">
        <title>Genome sequence of Silicibacter pomeroyi reveals adaptations to the marine environment.</title>
        <authorList>
            <person name="Moran M.A."/>
            <person name="Buchan A."/>
            <person name="Gonzalez J.M."/>
            <person name="Heidelberg J.F."/>
            <person name="Whitman W.B."/>
            <person name="Kiene R.P."/>
            <person name="Henriksen J.R."/>
            <person name="King G.M."/>
            <person name="Belas R."/>
            <person name="Fuqua C."/>
            <person name="Brinkac L.M."/>
            <person name="Lewis M."/>
            <person name="Johri S."/>
            <person name="Weaver B."/>
            <person name="Pai G."/>
            <person name="Eisen J.A."/>
            <person name="Rahe E."/>
            <person name="Sheldon W.M."/>
            <person name="Ye W."/>
            <person name="Miller T.R."/>
            <person name="Carlton J."/>
            <person name="Rasko D.A."/>
            <person name="Paulsen I.T."/>
            <person name="Ren Q."/>
            <person name="Daugherty S.C."/>
            <person name="DeBoy R.T."/>
            <person name="Dodson R.J."/>
            <person name="Durkin A.S."/>
            <person name="Madupu R."/>
            <person name="Nelson W.C."/>
            <person name="Sullivan S.A."/>
            <person name="Rosovitz M.J."/>
            <person name="Haft D.H."/>
            <person name="Selengut J."/>
            <person name="Ward N."/>
        </authorList>
    </citation>
    <scope>NUCLEOTIDE SEQUENCE [LARGE SCALE GENOMIC DNA]</scope>
    <source>
        <strain>ATCC 700808 / DSM 15171 / DSS-3</strain>
    </source>
</reference>
<reference key="2">
    <citation type="journal article" date="2014" name="Stand. Genomic Sci.">
        <title>An updated genome annotation for the model marine bacterium Ruegeria pomeroyi DSS-3.</title>
        <authorList>
            <person name="Rivers A.R."/>
            <person name="Smith C.B."/>
            <person name="Moran M.A."/>
        </authorList>
    </citation>
    <scope>GENOME REANNOTATION</scope>
    <source>
        <strain>ATCC 700808 / DSM 15171 / DSS-3</strain>
    </source>
</reference>
<reference evidence="7" key="3">
    <citation type="journal article" date="2009" name="J. Mol. Biol.">
        <title>The crystal structure of UehA in complex with ectoine-A comparison with other TRAP-T binding proteins.</title>
        <authorList>
            <person name="Lecher J."/>
            <person name="Pittelkow M."/>
            <person name="Zobel S."/>
            <person name="Bursy J."/>
            <person name="Bonig T."/>
            <person name="Smits S.H."/>
            <person name="Schmitt L."/>
            <person name="Bremer E."/>
        </authorList>
    </citation>
    <scope>X-RAY CRYSTALLOGRAPHY (2.90 ANGSTROMS) OF 28-339 IN COMPLEX WITH ECTOINE</scope>
    <scope>FUNCTION</scope>
    <scope>SUBUNIT</scope>
    <scope>SUBCELLULAR LOCATION</scope>
    <scope>DISULFIDE BOND</scope>
    <source>
        <strain>ATCC 700808 / DSM 15171 / DSS-3</strain>
    </source>
</reference>
<sequence length="339" mass="37276">MAQSITFTFGAVAAAGIALAAGTAAQADTWRYAFEEAMTDVQGVYAQKFKEEIEANSDHEIQLFPYGTLGESADIMEQTQDGILQFVDQSPGFTGSLIPEAQVFFVPYLLPTDQDHLARFFKESKAINDMFKPLYADQGLELLNMFPEGEVAMTTKTPVTTCSDLDEVKFRVMTNPLLVESYKAFGATPTPLPWGEVYGGLQTNVIQGQENPTFFLYSTKIYEVTDYITYAGHNNFTTAVMANKDFYDGLSAEDQQLVQNAALAAYDHTVVYQQQAADTELAKIMEAKPEMQVTVLTDEQRSCFKEAAAEVEAKFIEMTGDSGAAILKQMKADLAATAN</sequence>
<organism>
    <name type="scientific">Ruegeria pomeroyi (strain ATCC 700808 / DSM 15171 / DSS-3)</name>
    <name type="common">Silicibacter pomeroyi</name>
    <dbReference type="NCBI Taxonomy" id="246200"/>
    <lineage>
        <taxon>Bacteria</taxon>
        <taxon>Pseudomonadati</taxon>
        <taxon>Pseudomonadota</taxon>
        <taxon>Alphaproteobacteria</taxon>
        <taxon>Rhodobacterales</taxon>
        <taxon>Roseobacteraceae</taxon>
        <taxon>Ruegeria</taxon>
    </lineage>
</organism>
<protein>
    <recommendedName>
        <fullName evidence="4">Ectoine/5-hydroxyectoine-binding periplasmic protein UehA</fullName>
    </recommendedName>
    <alternativeName>
        <fullName evidence="4">Uptake of ectoine and hydroxyectoine protein A</fullName>
    </alternativeName>
</protein>
<keyword id="KW-0002">3D-structure</keyword>
<keyword id="KW-1015">Disulfide bond</keyword>
<keyword id="KW-0574">Periplasm</keyword>
<keyword id="KW-1185">Reference proteome</keyword>
<keyword id="KW-0732">Signal</keyword>
<keyword id="KW-0813">Transport</keyword>
<gene>
    <name evidence="3" type="primary">uehA</name>
    <name evidence="6" type="ordered locus">SPO1147</name>
</gene>
<dbReference type="EMBL" id="CP000031">
    <property type="protein sequence ID" value="AAV94447.1"/>
    <property type="molecule type" value="Genomic_DNA"/>
</dbReference>
<dbReference type="RefSeq" id="WP_011046894.1">
    <property type="nucleotide sequence ID" value="NC_003911.12"/>
</dbReference>
<dbReference type="PDB" id="3FXB">
    <property type="method" value="X-ray"/>
    <property type="resolution" value="2.90 A"/>
    <property type="chains" value="A/B=28-339"/>
</dbReference>
<dbReference type="PDBsum" id="3FXB"/>
<dbReference type="SMR" id="Q5LUA7"/>
<dbReference type="STRING" id="246200.SPO1147"/>
<dbReference type="PaxDb" id="246200-SPO1147"/>
<dbReference type="KEGG" id="sil:SPO1147"/>
<dbReference type="eggNOG" id="COG1638">
    <property type="taxonomic scope" value="Bacteria"/>
</dbReference>
<dbReference type="HOGENOM" id="CLU_036176_1_0_5"/>
<dbReference type="OrthoDB" id="8673861at2"/>
<dbReference type="EvolutionaryTrace" id="Q5LUA7"/>
<dbReference type="Proteomes" id="UP000001023">
    <property type="component" value="Chromosome"/>
</dbReference>
<dbReference type="GO" id="GO:0042597">
    <property type="term" value="C:periplasmic space"/>
    <property type="evidence" value="ECO:0007669"/>
    <property type="project" value="UniProtKB-SubCell"/>
</dbReference>
<dbReference type="GO" id="GO:0055085">
    <property type="term" value="P:transmembrane transport"/>
    <property type="evidence" value="ECO:0007669"/>
    <property type="project" value="InterPro"/>
</dbReference>
<dbReference type="CDD" id="cd13668">
    <property type="entry name" value="PBP2_TRAP_UehA_TeaA"/>
    <property type="match status" value="1"/>
</dbReference>
<dbReference type="FunFam" id="3.40.190.170:FF:000012">
    <property type="entry name" value="Ectoine/5-hydroxyectoine-binding periplasmic protein UehA"/>
    <property type="match status" value="1"/>
</dbReference>
<dbReference type="Gene3D" id="3.40.190.170">
    <property type="entry name" value="Bacterial extracellular solute-binding protein, family 7"/>
    <property type="match status" value="1"/>
</dbReference>
<dbReference type="InterPro" id="IPR018389">
    <property type="entry name" value="DctP_fam"/>
</dbReference>
<dbReference type="InterPro" id="IPR038404">
    <property type="entry name" value="TRAP_DctP_sf"/>
</dbReference>
<dbReference type="NCBIfam" id="NF037995">
    <property type="entry name" value="TRAP_S1"/>
    <property type="match status" value="1"/>
</dbReference>
<dbReference type="PANTHER" id="PTHR33376">
    <property type="match status" value="1"/>
</dbReference>
<dbReference type="PANTHER" id="PTHR33376:SF7">
    <property type="entry name" value="C4-DICARBOXYLATE-BINDING PROTEIN DCTB"/>
    <property type="match status" value="1"/>
</dbReference>
<dbReference type="Pfam" id="PF03480">
    <property type="entry name" value="DctP"/>
    <property type="match status" value="1"/>
</dbReference>
<proteinExistence type="evidence at protein level"/>
<feature type="signal peptide" evidence="1">
    <location>
        <begin position="1"/>
        <end position="20"/>
    </location>
</feature>
<feature type="chain" id="PRO_5004259469" description="Ectoine/5-hydroxyectoine-binding periplasmic protein UehA">
    <location>
        <begin position="21"/>
        <end position="339"/>
    </location>
</feature>
<feature type="binding site" evidence="2">
    <location>
        <position position="36"/>
    </location>
    <ligand>
        <name>L-ectoine</name>
        <dbReference type="ChEBI" id="CHEBI:58515"/>
    </ligand>
</feature>
<feature type="binding site" evidence="2">
    <location>
        <position position="171"/>
    </location>
    <ligand>
        <name>L-ectoine</name>
        <dbReference type="ChEBI" id="CHEBI:58515"/>
    </ligand>
</feature>
<feature type="binding site" evidence="2">
    <location>
        <position position="211"/>
    </location>
    <ligand>
        <name>L-ectoine</name>
        <dbReference type="ChEBI" id="CHEBI:58515"/>
    </ligand>
</feature>
<feature type="binding site" evidence="2">
    <location>
        <position position="215"/>
    </location>
    <ligand>
        <name>L-ectoine</name>
        <dbReference type="ChEBI" id="CHEBI:58515"/>
    </ligand>
</feature>
<feature type="binding site" evidence="2">
    <location>
        <position position="236"/>
    </location>
    <ligand>
        <name>L-ectoine</name>
        <dbReference type="ChEBI" id="CHEBI:58515"/>
    </ligand>
</feature>
<feature type="disulfide bond" evidence="2">
    <location>
        <begin position="162"/>
        <end position="303"/>
    </location>
</feature>
<feature type="strand" evidence="8">
    <location>
        <begin position="31"/>
        <end position="33"/>
    </location>
</feature>
<feature type="helix" evidence="8">
    <location>
        <begin position="41"/>
        <end position="55"/>
    </location>
</feature>
<feature type="strand" evidence="8">
    <location>
        <begin position="56"/>
        <end position="58"/>
    </location>
</feature>
<feature type="strand" evidence="8">
    <location>
        <begin position="62"/>
        <end position="64"/>
    </location>
</feature>
<feature type="helix" evidence="8">
    <location>
        <begin position="72"/>
        <end position="80"/>
    </location>
</feature>
<feature type="strand" evidence="8">
    <location>
        <begin position="85"/>
        <end position="88"/>
    </location>
</feature>
<feature type="helix" evidence="8">
    <location>
        <begin position="91"/>
        <end position="94"/>
    </location>
</feature>
<feature type="turn" evidence="8">
    <location>
        <begin position="95"/>
        <end position="97"/>
    </location>
</feature>
<feature type="helix" evidence="8">
    <location>
        <begin position="99"/>
        <end position="105"/>
    </location>
</feature>
<feature type="helix" evidence="8">
    <location>
        <begin position="114"/>
        <end position="123"/>
    </location>
</feature>
<feature type="helix" evidence="8">
    <location>
        <begin position="125"/>
        <end position="128"/>
    </location>
</feature>
<feature type="helix" evidence="8">
    <location>
        <begin position="132"/>
        <end position="136"/>
    </location>
</feature>
<feature type="turn" evidence="8">
    <location>
        <begin position="137"/>
        <end position="139"/>
    </location>
</feature>
<feature type="strand" evidence="8">
    <location>
        <begin position="140"/>
        <end position="157"/>
    </location>
</feature>
<feature type="helix" evidence="8">
    <location>
        <begin position="162"/>
        <end position="164"/>
    </location>
</feature>
<feature type="strand" evidence="8">
    <location>
        <begin position="169"/>
        <end position="172"/>
    </location>
</feature>
<feature type="helix" evidence="8">
    <location>
        <begin position="176"/>
        <end position="185"/>
    </location>
</feature>
<feature type="strand" evidence="8">
    <location>
        <begin position="187"/>
        <end position="191"/>
    </location>
</feature>
<feature type="helix" evidence="8">
    <location>
        <begin position="194"/>
        <end position="196"/>
    </location>
</feature>
<feature type="helix" evidence="8">
    <location>
        <begin position="197"/>
        <end position="202"/>
    </location>
</feature>
<feature type="strand" evidence="8">
    <location>
        <begin position="208"/>
        <end position="212"/>
    </location>
</feature>
<feature type="helix" evidence="8">
    <location>
        <begin position="213"/>
        <end position="218"/>
    </location>
</feature>
<feature type="helix" evidence="8">
    <location>
        <begin position="221"/>
        <end position="223"/>
    </location>
</feature>
<feature type="strand" evidence="8">
    <location>
        <begin position="226"/>
        <end position="230"/>
    </location>
</feature>
<feature type="strand" evidence="8">
    <location>
        <begin position="235"/>
        <end position="243"/>
    </location>
</feature>
<feature type="helix" evidence="8">
    <location>
        <begin position="244"/>
        <end position="249"/>
    </location>
</feature>
<feature type="helix" evidence="8">
    <location>
        <begin position="252"/>
        <end position="277"/>
    </location>
</feature>
<feature type="helix" evidence="8">
    <location>
        <begin position="280"/>
        <end position="287"/>
    </location>
</feature>
<feature type="strand" evidence="8">
    <location>
        <begin position="292"/>
        <end position="295"/>
    </location>
</feature>
<feature type="helix" evidence="8">
    <location>
        <begin position="298"/>
        <end position="335"/>
    </location>
</feature>
<evidence type="ECO:0000255" key="1"/>
<evidence type="ECO:0000269" key="2">
    <source>
    </source>
</evidence>
<evidence type="ECO:0000303" key="3">
    <source>
    </source>
</evidence>
<evidence type="ECO:0000305" key="4"/>
<evidence type="ECO:0000305" key="5">
    <source>
    </source>
</evidence>
<evidence type="ECO:0000312" key="6">
    <source>
        <dbReference type="EMBL" id="AAV94447.1"/>
    </source>
</evidence>
<evidence type="ECO:0007744" key="7">
    <source>
        <dbReference type="PDB" id="3FXB"/>
    </source>
</evidence>
<evidence type="ECO:0007829" key="8">
    <source>
        <dbReference type="PDB" id="3FXB"/>
    </source>
</evidence>